<reference key="1">
    <citation type="submission" date="2007-08" db="EMBL/GenBank/DDBJ databases">
        <title>Complete sequence of Shewanella sediminis HAW-EB3.</title>
        <authorList>
            <consortium name="US DOE Joint Genome Institute"/>
            <person name="Copeland A."/>
            <person name="Lucas S."/>
            <person name="Lapidus A."/>
            <person name="Barry K."/>
            <person name="Glavina del Rio T."/>
            <person name="Dalin E."/>
            <person name="Tice H."/>
            <person name="Pitluck S."/>
            <person name="Chertkov O."/>
            <person name="Brettin T."/>
            <person name="Bruce D."/>
            <person name="Detter J.C."/>
            <person name="Han C."/>
            <person name="Schmutz J."/>
            <person name="Larimer F."/>
            <person name="Land M."/>
            <person name="Hauser L."/>
            <person name="Kyrpides N."/>
            <person name="Kim E."/>
            <person name="Zhao J.-S."/>
            <person name="Richardson P."/>
        </authorList>
    </citation>
    <scope>NUCLEOTIDE SEQUENCE [LARGE SCALE GENOMIC DNA]</scope>
    <source>
        <strain>HAW-EB3</strain>
    </source>
</reference>
<organism>
    <name type="scientific">Shewanella sediminis (strain HAW-EB3)</name>
    <dbReference type="NCBI Taxonomy" id="425104"/>
    <lineage>
        <taxon>Bacteria</taxon>
        <taxon>Pseudomonadati</taxon>
        <taxon>Pseudomonadota</taxon>
        <taxon>Gammaproteobacteria</taxon>
        <taxon>Alteromonadales</taxon>
        <taxon>Shewanellaceae</taxon>
        <taxon>Shewanella</taxon>
    </lineage>
</organism>
<feature type="chain" id="PRO_1000088070" description="3-ketoacyl-CoA thiolase">
    <location>
        <begin position="1"/>
        <end position="436"/>
    </location>
</feature>
<feature type="active site" description="Acyl-thioester intermediate" evidence="1">
    <location>
        <position position="99"/>
    </location>
</feature>
<feature type="active site" description="Proton acceptor" evidence="1">
    <location>
        <position position="392"/>
    </location>
</feature>
<feature type="active site" description="Proton acceptor" evidence="1">
    <location>
        <position position="422"/>
    </location>
</feature>
<dbReference type="EC" id="2.3.1.16" evidence="1"/>
<dbReference type="EMBL" id="CP000821">
    <property type="protein sequence ID" value="ABV36239.1"/>
    <property type="molecule type" value="Genomic_DNA"/>
</dbReference>
<dbReference type="RefSeq" id="WP_012141975.1">
    <property type="nucleotide sequence ID" value="NC_009831.1"/>
</dbReference>
<dbReference type="SMR" id="A8FTR6"/>
<dbReference type="STRING" id="425104.Ssed_1628"/>
<dbReference type="KEGG" id="sse:Ssed_1628"/>
<dbReference type="eggNOG" id="COG0183">
    <property type="taxonomic scope" value="Bacteria"/>
</dbReference>
<dbReference type="HOGENOM" id="CLU_031026_2_0_6"/>
<dbReference type="OrthoDB" id="1402717at2"/>
<dbReference type="UniPathway" id="UPA00659"/>
<dbReference type="Proteomes" id="UP000002015">
    <property type="component" value="Chromosome"/>
</dbReference>
<dbReference type="GO" id="GO:0005829">
    <property type="term" value="C:cytosol"/>
    <property type="evidence" value="ECO:0007669"/>
    <property type="project" value="TreeGrafter"/>
</dbReference>
<dbReference type="GO" id="GO:0003988">
    <property type="term" value="F:acetyl-CoA C-acyltransferase activity"/>
    <property type="evidence" value="ECO:0007669"/>
    <property type="project" value="UniProtKB-UniRule"/>
</dbReference>
<dbReference type="GO" id="GO:0006635">
    <property type="term" value="P:fatty acid beta-oxidation"/>
    <property type="evidence" value="ECO:0007669"/>
    <property type="project" value="UniProtKB-UniRule"/>
</dbReference>
<dbReference type="CDD" id="cd00751">
    <property type="entry name" value="thiolase"/>
    <property type="match status" value="1"/>
</dbReference>
<dbReference type="FunFam" id="3.40.47.10:FF:000011">
    <property type="entry name" value="3-ketoacyl-CoA thiolase"/>
    <property type="match status" value="1"/>
</dbReference>
<dbReference type="Gene3D" id="3.40.47.10">
    <property type="match status" value="1"/>
</dbReference>
<dbReference type="HAMAP" id="MF_01618">
    <property type="entry name" value="FadI"/>
    <property type="match status" value="1"/>
</dbReference>
<dbReference type="InterPro" id="IPR050521">
    <property type="entry name" value="3-ketoacyl-CoA_Thiolase"/>
</dbReference>
<dbReference type="InterPro" id="IPR012806">
    <property type="entry name" value="Ac-CoA_C-AcTrfase_FadI"/>
</dbReference>
<dbReference type="InterPro" id="IPR002155">
    <property type="entry name" value="Thiolase"/>
</dbReference>
<dbReference type="InterPro" id="IPR016039">
    <property type="entry name" value="Thiolase-like"/>
</dbReference>
<dbReference type="InterPro" id="IPR020610">
    <property type="entry name" value="Thiolase_AS"/>
</dbReference>
<dbReference type="InterPro" id="IPR020617">
    <property type="entry name" value="Thiolase_C"/>
</dbReference>
<dbReference type="InterPro" id="IPR020613">
    <property type="entry name" value="Thiolase_CS"/>
</dbReference>
<dbReference type="InterPro" id="IPR020616">
    <property type="entry name" value="Thiolase_N"/>
</dbReference>
<dbReference type="NCBIfam" id="TIGR01930">
    <property type="entry name" value="AcCoA-C-Actrans"/>
    <property type="match status" value="1"/>
</dbReference>
<dbReference type="NCBIfam" id="TIGR02446">
    <property type="entry name" value="FadI"/>
    <property type="match status" value="1"/>
</dbReference>
<dbReference type="NCBIfam" id="NF006516">
    <property type="entry name" value="PRK08963.1"/>
    <property type="match status" value="1"/>
</dbReference>
<dbReference type="PANTHER" id="PTHR42689">
    <property type="entry name" value="ACETYL-COA ACYLTRANSFERASE FADA2 (3-KETOACYL-COA THIOLASE) (BETA-KETOTHIOLASE)-RELATED"/>
    <property type="match status" value="1"/>
</dbReference>
<dbReference type="PANTHER" id="PTHR42689:SF1">
    <property type="entry name" value="ACETYL-COA ACYLTRANSFERASE FADA2 (3-KETOACYL-COA THIOLASE) (BETA-KETOTHIOLASE)-RELATED"/>
    <property type="match status" value="1"/>
</dbReference>
<dbReference type="Pfam" id="PF02803">
    <property type="entry name" value="Thiolase_C"/>
    <property type="match status" value="1"/>
</dbReference>
<dbReference type="Pfam" id="PF00108">
    <property type="entry name" value="Thiolase_N"/>
    <property type="match status" value="1"/>
</dbReference>
<dbReference type="PIRSF" id="PIRSF000429">
    <property type="entry name" value="Ac-CoA_Ac_transf"/>
    <property type="match status" value="1"/>
</dbReference>
<dbReference type="SUPFAM" id="SSF53901">
    <property type="entry name" value="Thiolase-like"/>
    <property type="match status" value="2"/>
</dbReference>
<dbReference type="PROSITE" id="PS00737">
    <property type="entry name" value="THIOLASE_2"/>
    <property type="match status" value="1"/>
</dbReference>
<dbReference type="PROSITE" id="PS00099">
    <property type="entry name" value="THIOLASE_3"/>
    <property type="match status" value="1"/>
</dbReference>
<proteinExistence type="inferred from homology"/>
<name>FADI_SHESH</name>
<keyword id="KW-0012">Acyltransferase</keyword>
<keyword id="KW-0963">Cytoplasm</keyword>
<keyword id="KW-0276">Fatty acid metabolism</keyword>
<keyword id="KW-0442">Lipid degradation</keyword>
<keyword id="KW-0443">Lipid metabolism</keyword>
<keyword id="KW-1185">Reference proteome</keyword>
<keyword id="KW-0808">Transferase</keyword>
<protein>
    <recommendedName>
        <fullName evidence="1">3-ketoacyl-CoA thiolase</fullName>
        <ecNumber evidence="1">2.3.1.16</ecNumber>
    </recommendedName>
    <alternativeName>
        <fullName evidence="1">ACSs</fullName>
    </alternativeName>
    <alternativeName>
        <fullName evidence="1">Acetyl-CoA acyltransferase</fullName>
    </alternativeName>
    <alternativeName>
        <fullName evidence="1">Acyl-CoA ligase</fullName>
    </alternativeName>
    <alternativeName>
        <fullName evidence="1">Beta-ketothiolase</fullName>
    </alternativeName>
    <alternativeName>
        <fullName evidence="1">Fatty acid oxidation complex subunit beta</fullName>
    </alternativeName>
</protein>
<gene>
    <name evidence="1" type="primary">fadI</name>
    <name type="ordered locus">Ssed_1628</name>
</gene>
<sequence>MSDRQQVTNARGDRIAIVTGLRTPFAKQATAFHGVSALDMGKMVVNEMLSRSELDPKQIEQLVYGQVVLMPAAPNIAREIVLGTGMDVATDAYSVTRACATSFQSTVNVAESIMTGNIEIGIAGGADSSSVVPIGVSKKLAHALIDLNKARSFGQKLAIIRRLGLKDLLPVPPAVAEFSTGLSMGQTAEQMAKTYNISRADQDALAHRSHSLATETWNAGHLTDEVMAAHVPPYKSFIDRDNNIRENSTIESYAKLRPAFDRKHGTVTAATSTPLTDGASAVLLMSESRAKALGYDPIGYIKSYAFSAIDVWEDMLMGPSYATPLALKRAGMELEDLTLIEMHEAFAAQTLANMQMFGSKKFAAEKLGRNRAIGEIDMSKFNVLGGSLAYGHPFAATGTRLITQVCRELKRRGGGTGLTTACAAGGLGAAMIVEVE</sequence>
<accession>A8FTR6</accession>
<evidence type="ECO:0000255" key="1">
    <source>
        <dbReference type="HAMAP-Rule" id="MF_01618"/>
    </source>
</evidence>
<comment type="function">
    <text evidence="1">Catalyzes the final step of fatty acid oxidation in which acetyl-CoA is released and the CoA ester of a fatty acid two carbons shorter is formed.</text>
</comment>
<comment type="catalytic activity">
    <reaction evidence="1">
        <text>an acyl-CoA + acetyl-CoA = a 3-oxoacyl-CoA + CoA</text>
        <dbReference type="Rhea" id="RHEA:21564"/>
        <dbReference type="ChEBI" id="CHEBI:57287"/>
        <dbReference type="ChEBI" id="CHEBI:57288"/>
        <dbReference type="ChEBI" id="CHEBI:58342"/>
        <dbReference type="ChEBI" id="CHEBI:90726"/>
        <dbReference type="EC" id="2.3.1.16"/>
    </reaction>
</comment>
<comment type="pathway">
    <text evidence="1">Lipid metabolism; fatty acid beta-oxidation.</text>
</comment>
<comment type="subunit">
    <text evidence="1">Heterotetramer of two alpha chains (FadJ) and two beta chains (FadI).</text>
</comment>
<comment type="subcellular location">
    <subcellularLocation>
        <location evidence="1">Cytoplasm</location>
    </subcellularLocation>
</comment>
<comment type="similarity">
    <text evidence="1">Belongs to the thiolase-like superfamily. Thiolase family.</text>
</comment>